<comment type="function">
    <text evidence="1">Specifically catalyzes the dephosphorylation of 2-phosphoglycolate. Is involved in the dissimilation of the intracellular 2-phosphoglycolate formed during the DNA repair of 3'-phosphoglycolate ends, a major class of DNA lesions induced by oxidative stress.</text>
</comment>
<comment type="catalytic activity">
    <reaction evidence="1">
        <text>2-phosphoglycolate + H2O = glycolate + phosphate</text>
        <dbReference type="Rhea" id="RHEA:14369"/>
        <dbReference type="ChEBI" id="CHEBI:15377"/>
        <dbReference type="ChEBI" id="CHEBI:29805"/>
        <dbReference type="ChEBI" id="CHEBI:43474"/>
        <dbReference type="ChEBI" id="CHEBI:58033"/>
        <dbReference type="EC" id="3.1.3.18"/>
    </reaction>
</comment>
<comment type="cofactor">
    <cofactor evidence="1">
        <name>Mg(2+)</name>
        <dbReference type="ChEBI" id="CHEBI:18420"/>
    </cofactor>
</comment>
<comment type="pathway">
    <text evidence="1">Organic acid metabolism; glycolate biosynthesis; glycolate from 2-phosphoglycolate: step 1/1.</text>
</comment>
<comment type="similarity">
    <text evidence="1">Belongs to the HAD-like hydrolase superfamily. CbbY/CbbZ/Gph/YieH family.</text>
</comment>
<accession>Q9KNV6</accession>
<keyword id="KW-0119">Carbohydrate metabolism</keyword>
<keyword id="KW-0378">Hydrolase</keyword>
<keyword id="KW-0460">Magnesium</keyword>
<keyword id="KW-0479">Metal-binding</keyword>
<keyword id="KW-1185">Reference proteome</keyword>
<name>GPH_VIBCH</name>
<reference key="1">
    <citation type="journal article" date="2000" name="Nature">
        <title>DNA sequence of both chromosomes of the cholera pathogen Vibrio cholerae.</title>
        <authorList>
            <person name="Heidelberg J.F."/>
            <person name="Eisen J.A."/>
            <person name="Nelson W.C."/>
            <person name="Clayton R.A."/>
            <person name="Gwinn M.L."/>
            <person name="Dodson R.J."/>
            <person name="Haft D.H."/>
            <person name="Hickey E.K."/>
            <person name="Peterson J.D."/>
            <person name="Umayam L.A."/>
            <person name="Gill S.R."/>
            <person name="Nelson K.E."/>
            <person name="Read T.D."/>
            <person name="Tettelin H."/>
            <person name="Richardson D.L."/>
            <person name="Ermolaeva M.D."/>
            <person name="Vamathevan J.J."/>
            <person name="Bass S."/>
            <person name="Qin H."/>
            <person name="Dragoi I."/>
            <person name="Sellers P."/>
            <person name="McDonald L.A."/>
            <person name="Utterback T.R."/>
            <person name="Fleischmann R.D."/>
            <person name="Nierman W.C."/>
            <person name="White O."/>
            <person name="Salzberg S.L."/>
            <person name="Smith H.O."/>
            <person name="Colwell R.R."/>
            <person name="Mekalanos J.J."/>
            <person name="Venter J.C."/>
            <person name="Fraser C.M."/>
        </authorList>
    </citation>
    <scope>NUCLEOTIDE SEQUENCE [LARGE SCALE GENOMIC DNA]</scope>
    <source>
        <strain>ATCC 39315 / El Tor Inaba N16961</strain>
    </source>
</reference>
<evidence type="ECO:0000255" key="1">
    <source>
        <dbReference type="HAMAP-Rule" id="MF_00495"/>
    </source>
</evidence>
<gene>
    <name evidence="1" type="primary">gph</name>
    <name type="ordered locus">VC_2624</name>
</gene>
<dbReference type="EC" id="3.1.3.18" evidence="1"/>
<dbReference type="EMBL" id="AE003852">
    <property type="protein sequence ID" value="AAF95765.1"/>
    <property type="molecule type" value="Genomic_DNA"/>
</dbReference>
<dbReference type="PIR" id="F82052">
    <property type="entry name" value="F82052"/>
</dbReference>
<dbReference type="RefSeq" id="NP_232252.1">
    <property type="nucleotide sequence ID" value="NC_002505.1"/>
</dbReference>
<dbReference type="RefSeq" id="WP_000835873.1">
    <property type="nucleotide sequence ID" value="NZ_LT906614.1"/>
</dbReference>
<dbReference type="SMR" id="Q9KNV6"/>
<dbReference type="STRING" id="243277.VC_2624"/>
<dbReference type="DNASU" id="2615641"/>
<dbReference type="EnsemblBacteria" id="AAF95765">
    <property type="protein sequence ID" value="AAF95765"/>
    <property type="gene ID" value="VC_2624"/>
</dbReference>
<dbReference type="KEGG" id="vch:VC_2624"/>
<dbReference type="PATRIC" id="fig|243277.26.peg.2502"/>
<dbReference type="eggNOG" id="COG0546">
    <property type="taxonomic scope" value="Bacteria"/>
</dbReference>
<dbReference type="HOGENOM" id="CLU_045011_19_1_6"/>
<dbReference type="UniPathway" id="UPA00865">
    <property type="reaction ID" value="UER00834"/>
</dbReference>
<dbReference type="Proteomes" id="UP000000584">
    <property type="component" value="Chromosome 1"/>
</dbReference>
<dbReference type="GO" id="GO:0005829">
    <property type="term" value="C:cytosol"/>
    <property type="evidence" value="ECO:0000318"/>
    <property type="project" value="GO_Central"/>
</dbReference>
<dbReference type="GO" id="GO:0046872">
    <property type="term" value="F:metal ion binding"/>
    <property type="evidence" value="ECO:0007669"/>
    <property type="project" value="UniProtKB-KW"/>
</dbReference>
<dbReference type="GO" id="GO:0008967">
    <property type="term" value="F:phosphoglycolate phosphatase activity"/>
    <property type="evidence" value="ECO:0000318"/>
    <property type="project" value="GO_Central"/>
</dbReference>
<dbReference type="GO" id="GO:0005975">
    <property type="term" value="P:carbohydrate metabolic process"/>
    <property type="evidence" value="ECO:0007669"/>
    <property type="project" value="InterPro"/>
</dbReference>
<dbReference type="GO" id="GO:0006281">
    <property type="term" value="P:DNA repair"/>
    <property type="evidence" value="ECO:0000318"/>
    <property type="project" value="GO_Central"/>
</dbReference>
<dbReference type="GO" id="GO:0046295">
    <property type="term" value="P:glycolate biosynthetic process"/>
    <property type="evidence" value="ECO:0007669"/>
    <property type="project" value="UniProtKB-UniRule"/>
</dbReference>
<dbReference type="CDD" id="cd16417">
    <property type="entry name" value="HAD_PGPase"/>
    <property type="match status" value="1"/>
</dbReference>
<dbReference type="FunFam" id="3.40.50.1000:FF:000022">
    <property type="entry name" value="Phosphoglycolate phosphatase"/>
    <property type="match status" value="1"/>
</dbReference>
<dbReference type="Gene3D" id="3.40.50.1000">
    <property type="entry name" value="HAD superfamily/HAD-like"/>
    <property type="match status" value="1"/>
</dbReference>
<dbReference type="Gene3D" id="1.10.150.240">
    <property type="entry name" value="Putative phosphatase, domain 2"/>
    <property type="match status" value="1"/>
</dbReference>
<dbReference type="HAMAP" id="MF_00495">
    <property type="entry name" value="GPH_hydrolase_bact"/>
    <property type="match status" value="1"/>
</dbReference>
<dbReference type="InterPro" id="IPR050155">
    <property type="entry name" value="HAD-like_hydrolase_sf"/>
</dbReference>
<dbReference type="InterPro" id="IPR036412">
    <property type="entry name" value="HAD-like_sf"/>
</dbReference>
<dbReference type="InterPro" id="IPR006439">
    <property type="entry name" value="HAD-SF_hydro_IA"/>
</dbReference>
<dbReference type="InterPro" id="IPR006549">
    <property type="entry name" value="HAD-SF_hydro_IIIA"/>
</dbReference>
<dbReference type="InterPro" id="IPR041492">
    <property type="entry name" value="HAD_2"/>
</dbReference>
<dbReference type="InterPro" id="IPR023214">
    <property type="entry name" value="HAD_sf"/>
</dbReference>
<dbReference type="InterPro" id="IPR023198">
    <property type="entry name" value="PGP-like_dom2"/>
</dbReference>
<dbReference type="InterPro" id="IPR037512">
    <property type="entry name" value="PGPase_prok"/>
</dbReference>
<dbReference type="NCBIfam" id="TIGR01549">
    <property type="entry name" value="HAD-SF-IA-v1"/>
    <property type="match status" value="1"/>
</dbReference>
<dbReference type="NCBIfam" id="TIGR01509">
    <property type="entry name" value="HAD-SF-IA-v3"/>
    <property type="match status" value="1"/>
</dbReference>
<dbReference type="NCBIfam" id="TIGR01662">
    <property type="entry name" value="HAD-SF-IIIA"/>
    <property type="match status" value="1"/>
</dbReference>
<dbReference type="NCBIfam" id="TIGR01449">
    <property type="entry name" value="PGP_bact"/>
    <property type="match status" value="1"/>
</dbReference>
<dbReference type="NCBIfam" id="NF009695">
    <property type="entry name" value="PRK13222.1-2"/>
    <property type="match status" value="1"/>
</dbReference>
<dbReference type="PANTHER" id="PTHR43434">
    <property type="entry name" value="PHOSPHOGLYCOLATE PHOSPHATASE"/>
    <property type="match status" value="1"/>
</dbReference>
<dbReference type="PANTHER" id="PTHR43434:SF1">
    <property type="entry name" value="PHOSPHOGLYCOLATE PHOSPHATASE"/>
    <property type="match status" value="1"/>
</dbReference>
<dbReference type="Pfam" id="PF13419">
    <property type="entry name" value="HAD_2"/>
    <property type="match status" value="1"/>
</dbReference>
<dbReference type="SFLD" id="SFLDG01135">
    <property type="entry name" value="C1.5.6:_HAD__Beta-PGM__Phospha"/>
    <property type="match status" value="1"/>
</dbReference>
<dbReference type="SFLD" id="SFLDG01129">
    <property type="entry name" value="C1.5:_HAD__Beta-PGM__Phosphata"/>
    <property type="match status" value="1"/>
</dbReference>
<dbReference type="SUPFAM" id="SSF56784">
    <property type="entry name" value="HAD-like"/>
    <property type="match status" value="1"/>
</dbReference>
<organism>
    <name type="scientific">Vibrio cholerae serotype O1 (strain ATCC 39315 / El Tor Inaba N16961)</name>
    <dbReference type="NCBI Taxonomy" id="243277"/>
    <lineage>
        <taxon>Bacteria</taxon>
        <taxon>Pseudomonadati</taxon>
        <taxon>Pseudomonadota</taxon>
        <taxon>Gammaproteobacteria</taxon>
        <taxon>Vibrionales</taxon>
        <taxon>Vibrionaceae</taxon>
        <taxon>Vibrio</taxon>
    </lineage>
</organism>
<sequence>MKSIKLIAFDLDGTLLDSVPDLAVAADQAARAVGYPAVSEAQVRDYVGNGADVLIARALSQSLTINPELSPELRAQARHLFDEFYEQTGHKLSHLYPNVKTTLLELHQAGFILALVTNKPSKFVPDVLEQHGIAHFFSDVIGGDTFPNKKPDPMALNWLLEKHQLSAEQMLMVGDSKNDILAAKNAGCYSFGLTYGYNHGEPIANAEPDFVSDDIGTLLEVVLVSA</sequence>
<feature type="chain" id="PRO_0000108043" description="Phosphoglycolate phosphatase">
    <location>
        <begin position="1"/>
        <end position="226"/>
    </location>
</feature>
<feature type="active site" description="Nucleophile" evidence="1">
    <location>
        <position position="10"/>
    </location>
</feature>
<feature type="binding site" evidence="1">
    <location>
        <position position="10"/>
    </location>
    <ligand>
        <name>Mg(2+)</name>
        <dbReference type="ChEBI" id="CHEBI:18420"/>
    </ligand>
</feature>
<feature type="binding site" evidence="1">
    <location>
        <position position="12"/>
    </location>
    <ligand>
        <name>Mg(2+)</name>
        <dbReference type="ChEBI" id="CHEBI:18420"/>
    </ligand>
</feature>
<feature type="binding site" evidence="1">
    <location>
        <position position="175"/>
    </location>
    <ligand>
        <name>Mg(2+)</name>
        <dbReference type="ChEBI" id="CHEBI:18420"/>
    </ligand>
</feature>
<protein>
    <recommendedName>
        <fullName evidence="1">Phosphoglycolate phosphatase</fullName>
        <shortName evidence="1">PGP</shortName>
        <shortName evidence="1">PGPase</shortName>
        <ecNumber evidence="1">3.1.3.18</ecNumber>
    </recommendedName>
</protein>
<proteinExistence type="inferred from homology"/>